<feature type="signal peptide" evidence="2">
    <location>
        <begin position="1"/>
        <end position="24"/>
    </location>
</feature>
<feature type="chain" id="PRO_0000004031" description="ADP-ribosyl cyclase/cyclic ADP-ribose hydrolase">
    <location>
        <begin position="25"/>
        <end position="282"/>
    </location>
</feature>
<feature type="disulfide bond" evidence="1">
    <location>
        <begin position="39"/>
        <end position="58"/>
    </location>
</feature>
<feature type="disulfide bond" evidence="1">
    <location>
        <begin position="75"/>
        <end position="155"/>
    </location>
</feature>
<feature type="disulfide bond" evidence="1">
    <location>
        <begin position="136"/>
        <end position="149"/>
    </location>
</feature>
<feature type="disulfide bond" evidence="1">
    <location>
        <begin position="230"/>
        <end position="251"/>
    </location>
</feature>
<feature type="disulfide bond" evidence="1">
    <location>
        <begin position="263"/>
        <end position="272"/>
    </location>
</feature>
<feature type="mutagenesis site" description="Acquires cADPR hydrolase activity; when associated with C-176." evidence="4">
    <original>K</original>
    <variation>C</variation>
    <location>
        <position position="95"/>
    </location>
</feature>
<feature type="mutagenesis site" description="Acquires cADPR hydrolase activity; when associated with C-95." evidence="4">
    <original>E</original>
    <variation>C</variation>
    <location>
        <position position="176"/>
    </location>
</feature>
<comment type="function">
    <text evidence="1 4">Synthesizes cyclic ADP-ribose (cADPR), a second messenger for calcium mobilization from endoplasmic reticulum (PubMed:7961800). Might make the Ca(2+) mobilizer nicotinate-adenine dinucleotide phosphate (By similarity). Does not have cADPR hydrolase activity (PubMed:7961800).</text>
</comment>
<comment type="catalytic activity">
    <reaction evidence="4">
        <text>NAD(+) = cyclic ADP-beta-D-ribose + nicotinamide + H(+)</text>
        <dbReference type="Rhea" id="RHEA:38611"/>
        <dbReference type="ChEBI" id="CHEBI:15378"/>
        <dbReference type="ChEBI" id="CHEBI:17154"/>
        <dbReference type="ChEBI" id="CHEBI:57540"/>
        <dbReference type="ChEBI" id="CHEBI:73672"/>
    </reaction>
    <physiologicalReaction direction="left-to-right" evidence="4">
        <dbReference type="Rhea" id="RHEA:38612"/>
    </physiologicalReaction>
</comment>
<comment type="catalytic activity">
    <reaction>
        <text>NAD(+) + H2O = ADP-D-ribose + nicotinamide + H(+)</text>
        <dbReference type="Rhea" id="RHEA:16301"/>
        <dbReference type="ChEBI" id="CHEBI:15377"/>
        <dbReference type="ChEBI" id="CHEBI:15378"/>
        <dbReference type="ChEBI" id="CHEBI:17154"/>
        <dbReference type="ChEBI" id="CHEBI:57540"/>
        <dbReference type="ChEBI" id="CHEBI:57967"/>
        <dbReference type="EC" id="3.2.2.6"/>
    </reaction>
</comment>
<comment type="catalytic activity">
    <reaction evidence="1">
        <text>nicotinate + NADP(+) = nicotinate-adenine dinucleotide phosphate + nicotinamide</text>
        <dbReference type="Rhea" id="RHEA:38599"/>
        <dbReference type="ChEBI" id="CHEBI:17154"/>
        <dbReference type="ChEBI" id="CHEBI:32544"/>
        <dbReference type="ChEBI" id="CHEBI:58349"/>
        <dbReference type="ChEBI" id="CHEBI:75967"/>
        <dbReference type="EC" id="2.4.99.20"/>
    </reaction>
</comment>
<comment type="activity regulation">
    <text evidence="1">Activity is presumably regulated by its sequestration in vesicles before egg fertilization. After fertilization and upon NADase release, it could then be regulated via its potential phosphorylation sites.</text>
</comment>
<comment type="subcellular location">
    <subcellularLocation>
        <location evidence="1">Cytoplasmic vesicle</location>
    </subcellularLocation>
    <text>Localized to vesicles or granules within ova of all stages.</text>
</comment>
<comment type="tissue specificity">
    <text evidence="3">Ovotestis.</text>
</comment>
<comment type="similarity">
    <text evidence="6">Belongs to the ADP-ribosyl cyclase family.</text>
</comment>
<name>NADA_APLKU</name>
<sequence length="282" mass="31889">MSPVAIVACVCLAVTLTRISPSEAIFPTPELQNVFLGRCKDYEITRYLTILPRVKSDCRALWTNFFKAFSFKAPCNLDLGSYKDFFQRAQQTLPKNKVMFWSGVYDEAHDFADDGRKYITLEDTLPGYMLNSLVWCGQRDKPGFNQKVCPDFKDCPVQARESFWGTASSSYAHSAEGDVTYMVDGSNPKVPAYRPDSFFGKYELPNLTNKVTKVKVIVLHQLGQKIIERCGAGSLLDLEMVVKAKKFGFDCVENPKSVLFLLCADNPNARECQLAKRYYRIA</sequence>
<accession>Q27312</accession>
<protein>
    <recommendedName>
        <fullName evidence="5">ADP-ribosyl cyclase/cyclic ADP-ribose hydrolase</fullName>
        <ecNumber evidence="4">3.2.2.-</ecNumber>
        <ecNumber evidence="4">3.2.2.6</ecNumber>
    </recommendedName>
    <alternativeName>
        <fullName>2'-phospho-ADP-ribosyl cyclase</fullName>
    </alternativeName>
    <alternativeName>
        <fullName>2'-phospho-ADP-ribosyl cyclase/2'-phospho-cyclic-ADP-ribose transferase</fullName>
        <ecNumber evidence="1">2.4.99.20</ecNumber>
    </alternativeName>
    <alternativeName>
        <fullName>2'-phospho-cyclic-ADP-ribose transferase</fullName>
    </alternativeName>
    <alternativeName>
        <fullName>ADP-ribosyl cyclase</fullName>
        <shortName>ADPRC</shortName>
        <shortName evidence="5">ADRC</shortName>
    </alternativeName>
    <alternativeName>
        <fullName>NAD glycohydrolase</fullName>
    </alternativeName>
    <alternativeName>
        <fullName>NAD(+) nucleosidase</fullName>
        <shortName>NADase</shortName>
    </alternativeName>
</protein>
<organism>
    <name type="scientific">Aplysia kurodai</name>
    <name type="common">Kuroda's sea hare</name>
    <dbReference type="NCBI Taxonomy" id="6501"/>
    <lineage>
        <taxon>Eukaryota</taxon>
        <taxon>Metazoa</taxon>
        <taxon>Spiralia</taxon>
        <taxon>Lophotrochozoa</taxon>
        <taxon>Mollusca</taxon>
        <taxon>Gastropoda</taxon>
        <taxon>Heterobranchia</taxon>
        <taxon>Euthyneura</taxon>
        <taxon>Tectipleura</taxon>
        <taxon>Aplysiida</taxon>
        <taxon>Aplysioidea</taxon>
        <taxon>Aplysiidae</taxon>
        <taxon>Aplysia</taxon>
    </lineage>
</organism>
<keyword id="KW-0106">Calcium</keyword>
<keyword id="KW-0968">Cytoplasmic vesicle</keyword>
<keyword id="KW-1015">Disulfide bond</keyword>
<keyword id="KW-0278">Fertilization</keyword>
<keyword id="KW-0378">Hydrolase</keyword>
<keyword id="KW-0520">NAD</keyword>
<keyword id="KW-0521">NADP</keyword>
<keyword id="KW-0732">Signal</keyword>
<keyword id="KW-0808">Transferase</keyword>
<dbReference type="EC" id="3.2.2.-" evidence="4"/>
<dbReference type="EC" id="3.2.2.6" evidence="4"/>
<dbReference type="EC" id="2.4.99.20" evidence="1"/>
<dbReference type="EMBL" id="D30048">
    <property type="protein sequence ID" value="BAA06284.1"/>
    <property type="molecule type" value="mRNA"/>
</dbReference>
<dbReference type="EMBL" id="D38536">
    <property type="protein sequence ID" value="BAA07537.1"/>
    <property type="molecule type" value="Genomic_DNA"/>
</dbReference>
<dbReference type="PIR" id="JC4134">
    <property type="entry name" value="JC4134"/>
</dbReference>
<dbReference type="SMR" id="Q27312"/>
<dbReference type="GO" id="GO:0031410">
    <property type="term" value="C:cytoplasmic vesicle"/>
    <property type="evidence" value="ECO:0007669"/>
    <property type="project" value="UniProtKB-KW"/>
</dbReference>
<dbReference type="GO" id="GO:0005886">
    <property type="term" value="C:plasma membrane"/>
    <property type="evidence" value="ECO:0007669"/>
    <property type="project" value="TreeGrafter"/>
</dbReference>
<dbReference type="GO" id="GO:0061809">
    <property type="term" value="F:NAD+ nucleosidase activity, cyclic ADP-ribose generating"/>
    <property type="evidence" value="ECO:0007669"/>
    <property type="project" value="UniProtKB-EC"/>
</dbReference>
<dbReference type="GO" id="GO:0016849">
    <property type="term" value="F:phosphorus-oxygen lyase activity"/>
    <property type="evidence" value="ECO:0007669"/>
    <property type="project" value="TreeGrafter"/>
</dbReference>
<dbReference type="GO" id="GO:0016740">
    <property type="term" value="F:transferase activity"/>
    <property type="evidence" value="ECO:0007669"/>
    <property type="project" value="UniProtKB-KW"/>
</dbReference>
<dbReference type="GO" id="GO:0030890">
    <property type="term" value="P:positive regulation of B cell proliferation"/>
    <property type="evidence" value="ECO:0007669"/>
    <property type="project" value="TreeGrafter"/>
</dbReference>
<dbReference type="GO" id="GO:0007338">
    <property type="term" value="P:single fertilization"/>
    <property type="evidence" value="ECO:0007669"/>
    <property type="project" value="UniProtKB-KW"/>
</dbReference>
<dbReference type="CDD" id="cd04759">
    <property type="entry name" value="Rib_hydrolase"/>
    <property type="match status" value="1"/>
</dbReference>
<dbReference type="Gene3D" id="1.20.82.10">
    <property type="entry name" value="ADP Ribosyl Cyclase, Chain A, domain 1"/>
    <property type="match status" value="1"/>
</dbReference>
<dbReference type="Gene3D" id="3.40.50.720">
    <property type="entry name" value="NAD(P)-binding Rossmann-like Domain"/>
    <property type="match status" value="1"/>
</dbReference>
<dbReference type="InterPro" id="IPR003193">
    <property type="entry name" value="ADP-ribosyl_cyclase"/>
</dbReference>
<dbReference type="PANTHER" id="PTHR10912">
    <property type="entry name" value="ADP-RIBOSYL CYCLASE"/>
    <property type="match status" value="1"/>
</dbReference>
<dbReference type="PANTHER" id="PTHR10912:SF7">
    <property type="entry name" value="ADP-RIBOSYL CYCLASE_CYCLIC ADP-RIBOSE HYDROLASE"/>
    <property type="match status" value="1"/>
</dbReference>
<dbReference type="Pfam" id="PF02267">
    <property type="entry name" value="Rib_hydrolayse"/>
    <property type="match status" value="1"/>
</dbReference>
<dbReference type="SUPFAM" id="SSF52309">
    <property type="entry name" value="N-(deoxy)ribosyltransferase-like"/>
    <property type="match status" value="1"/>
</dbReference>
<proteinExistence type="evidence at protein level"/>
<evidence type="ECO:0000250" key="1">
    <source>
        <dbReference type="UniProtKB" id="P29241"/>
    </source>
</evidence>
<evidence type="ECO:0000255" key="2"/>
<evidence type="ECO:0000269" key="3">
    <source>
    </source>
</evidence>
<evidence type="ECO:0000269" key="4">
    <source>
    </source>
</evidence>
<evidence type="ECO:0000303" key="5">
    <source>
    </source>
</evidence>
<evidence type="ECO:0000305" key="6"/>
<reference key="1">
    <citation type="journal article" date="1995" name="Gene">
        <title>The structure of the Aplysia kurodai gene encoding ADP-ribosyl cyclase, a second-messenger enzyme.</title>
        <authorList>
            <person name="Nata K."/>
            <person name="Sugimoto T."/>
            <person name="Tohgo A."/>
            <person name="Takamura T."/>
            <person name="Noguchi N."/>
            <person name="Matsuoka A."/>
            <person name="Numakunai T."/>
            <person name="Shikama K."/>
            <person name="Yonekura H."/>
            <person name="Takasawa S."/>
            <person name="Okamoto H."/>
        </authorList>
    </citation>
    <scope>NUCLEOTIDE SEQUENCE [GENOMIC DNA / MRNA]</scope>
    <scope>TISSUE SPECIFICITY</scope>
    <source>
        <tissue>Ovotestis</tissue>
    </source>
</reference>
<reference key="2">
    <citation type="journal article" date="1994" name="J. Biol. Chem.">
        <title>Essential cysteine residues for cyclic ADP-ribose synthesis and hydrolysis by CD38.</title>
        <authorList>
            <person name="Tohgo A."/>
            <person name="Takasawa S."/>
            <person name="Noguchi N."/>
            <person name="Koguma T."/>
            <person name="Nata K."/>
            <person name="Sugimoto T."/>
            <person name="Furuya Y."/>
            <person name="Yonekura H."/>
            <person name="Okamoto H."/>
        </authorList>
    </citation>
    <scope>FUNCTION</scope>
    <scope>CATALYTIC ACTIVITY</scope>
    <scope>MUTAGENESIS OF LYS-95 AND GLU-176</scope>
</reference>